<feature type="chain" id="PRO_0000368789" description="ATP synthase subunit b">
    <location>
        <begin position="1"/>
        <end position="173"/>
    </location>
</feature>
<feature type="transmembrane region" description="Helical" evidence="1">
    <location>
        <begin position="15"/>
        <end position="35"/>
    </location>
</feature>
<comment type="function">
    <text evidence="1">F(1)F(0) ATP synthase produces ATP from ADP in the presence of a proton or sodium gradient. F-type ATPases consist of two structural domains, F(1) containing the extramembraneous catalytic core and F(0) containing the membrane proton channel, linked together by a central stalk and a peripheral stalk. During catalysis, ATP synthesis in the catalytic domain of F(1) is coupled via a rotary mechanism of the central stalk subunits to proton translocation.</text>
</comment>
<comment type="function">
    <text evidence="1">Component of the F(0) channel, it forms part of the peripheral stalk, linking F(1) to F(0).</text>
</comment>
<comment type="subunit">
    <text evidence="1">F-type ATPases have 2 components, F(1) - the catalytic core - and F(0) - the membrane proton channel. F(1) has five subunits: alpha(3), beta(3), gamma(1), delta(1), epsilon(1). F(0) has three main subunits: a(1), b(2) and c(10-14). The alpha and beta chains form an alternating ring which encloses part of the gamma chain. F(1) is attached to F(0) by a central stalk formed by the gamma and epsilon chains, while a peripheral stalk is formed by the delta and b chains.</text>
</comment>
<comment type="subcellular location">
    <subcellularLocation>
        <location evidence="1">Cell membrane</location>
        <topology evidence="1">Single-pass membrane protein</topology>
    </subcellularLocation>
</comment>
<comment type="similarity">
    <text evidence="1">Belongs to the ATPase B chain family.</text>
</comment>
<evidence type="ECO:0000255" key="1">
    <source>
        <dbReference type="HAMAP-Rule" id="MF_01398"/>
    </source>
</evidence>
<name>ATPF_STAA3</name>
<proteinExistence type="inferred from homology"/>
<protein>
    <recommendedName>
        <fullName evidence="1">ATP synthase subunit b</fullName>
    </recommendedName>
    <alternativeName>
        <fullName evidence="1">ATP synthase F(0) sector subunit b</fullName>
    </alternativeName>
    <alternativeName>
        <fullName evidence="1">ATPase subunit I</fullName>
    </alternativeName>
    <alternativeName>
        <fullName evidence="1">F-type ATPase subunit b</fullName>
        <shortName evidence="1">F-ATPase subunit b</shortName>
    </alternativeName>
</protein>
<accession>Q2FF20</accession>
<dbReference type="EMBL" id="CP000255">
    <property type="protein sequence ID" value="ABD22788.1"/>
    <property type="molecule type" value="Genomic_DNA"/>
</dbReference>
<dbReference type="RefSeq" id="WP_000140679.1">
    <property type="nucleotide sequence ID" value="NZ_CP027476.1"/>
</dbReference>
<dbReference type="SMR" id="Q2FF20"/>
<dbReference type="KEGG" id="saa:SAUSA300_2062"/>
<dbReference type="HOGENOM" id="CLU_079215_4_2_9"/>
<dbReference type="OMA" id="ILAWFTM"/>
<dbReference type="Proteomes" id="UP000001939">
    <property type="component" value="Chromosome"/>
</dbReference>
<dbReference type="GO" id="GO:0005886">
    <property type="term" value="C:plasma membrane"/>
    <property type="evidence" value="ECO:0007669"/>
    <property type="project" value="UniProtKB-SubCell"/>
</dbReference>
<dbReference type="GO" id="GO:0045259">
    <property type="term" value="C:proton-transporting ATP synthase complex"/>
    <property type="evidence" value="ECO:0007669"/>
    <property type="project" value="UniProtKB-KW"/>
</dbReference>
<dbReference type="GO" id="GO:0046933">
    <property type="term" value="F:proton-transporting ATP synthase activity, rotational mechanism"/>
    <property type="evidence" value="ECO:0007669"/>
    <property type="project" value="UniProtKB-UniRule"/>
</dbReference>
<dbReference type="GO" id="GO:0046961">
    <property type="term" value="F:proton-transporting ATPase activity, rotational mechanism"/>
    <property type="evidence" value="ECO:0007669"/>
    <property type="project" value="TreeGrafter"/>
</dbReference>
<dbReference type="CDD" id="cd06503">
    <property type="entry name" value="ATP-synt_Fo_b"/>
    <property type="match status" value="1"/>
</dbReference>
<dbReference type="HAMAP" id="MF_01398">
    <property type="entry name" value="ATP_synth_b_bprime"/>
    <property type="match status" value="1"/>
</dbReference>
<dbReference type="InterPro" id="IPR028987">
    <property type="entry name" value="ATP_synth_B-like_membr_sf"/>
</dbReference>
<dbReference type="InterPro" id="IPR002146">
    <property type="entry name" value="ATP_synth_b/b'su_bac/chlpt"/>
</dbReference>
<dbReference type="InterPro" id="IPR005864">
    <property type="entry name" value="ATP_synth_F0_bsu_bac"/>
</dbReference>
<dbReference type="InterPro" id="IPR050059">
    <property type="entry name" value="ATP_synthase_B_chain"/>
</dbReference>
<dbReference type="NCBIfam" id="TIGR01144">
    <property type="entry name" value="ATP_synt_b"/>
    <property type="match status" value="1"/>
</dbReference>
<dbReference type="NCBIfam" id="NF009987">
    <property type="entry name" value="PRK13453.1"/>
    <property type="match status" value="1"/>
</dbReference>
<dbReference type="PANTHER" id="PTHR33445:SF1">
    <property type="entry name" value="ATP SYNTHASE SUBUNIT B"/>
    <property type="match status" value="1"/>
</dbReference>
<dbReference type="PANTHER" id="PTHR33445">
    <property type="entry name" value="ATP SYNTHASE SUBUNIT B', CHLOROPLASTIC"/>
    <property type="match status" value="1"/>
</dbReference>
<dbReference type="Pfam" id="PF00430">
    <property type="entry name" value="ATP-synt_B"/>
    <property type="match status" value="1"/>
</dbReference>
<dbReference type="SUPFAM" id="SSF81573">
    <property type="entry name" value="F1F0 ATP synthase subunit B, membrane domain"/>
    <property type="match status" value="1"/>
</dbReference>
<gene>
    <name evidence="1" type="primary">atpF</name>
    <name type="ordered locus">SAUSA300_2062</name>
</gene>
<keyword id="KW-0066">ATP synthesis</keyword>
<keyword id="KW-1003">Cell membrane</keyword>
<keyword id="KW-0138">CF(0)</keyword>
<keyword id="KW-0375">Hydrogen ion transport</keyword>
<keyword id="KW-0406">Ion transport</keyword>
<keyword id="KW-0472">Membrane</keyword>
<keyword id="KW-0812">Transmembrane</keyword>
<keyword id="KW-1133">Transmembrane helix</keyword>
<keyword id="KW-0813">Transport</keyword>
<organism>
    <name type="scientific">Staphylococcus aureus (strain USA300)</name>
    <dbReference type="NCBI Taxonomy" id="367830"/>
    <lineage>
        <taxon>Bacteria</taxon>
        <taxon>Bacillati</taxon>
        <taxon>Bacillota</taxon>
        <taxon>Bacilli</taxon>
        <taxon>Bacillales</taxon>
        <taxon>Staphylococcaceae</taxon>
        <taxon>Staphylococcus</taxon>
    </lineage>
</organism>
<reference key="1">
    <citation type="journal article" date="2006" name="Lancet">
        <title>Complete genome sequence of USA300, an epidemic clone of community-acquired meticillin-resistant Staphylococcus aureus.</title>
        <authorList>
            <person name="Diep B.A."/>
            <person name="Gill S.R."/>
            <person name="Chang R.F."/>
            <person name="Phan T.H."/>
            <person name="Chen J.H."/>
            <person name="Davidson M.G."/>
            <person name="Lin F."/>
            <person name="Lin J."/>
            <person name="Carleton H.A."/>
            <person name="Mongodin E.F."/>
            <person name="Sensabaugh G.F."/>
            <person name="Perdreau-Remington F."/>
        </authorList>
    </citation>
    <scope>NUCLEOTIDE SEQUENCE [LARGE SCALE GENOMIC DNA]</scope>
    <source>
        <strain>USA300</strain>
    </source>
</reference>
<sequence length="173" mass="19539">MTETANLFVLGAAGGVEWGTVIVQVLTFIVLLALLKKFAWGPLKDVMDKRERDINRDIDDAEQAKLNAQKLEEENKQKLKETQEEVQKILEDAKVQARQQQEQIIHEANVRANGMIETAQSEINSQKERAIADINNQVSELSVLIASKVLRKEISEQDQKALVDKYLKEAGDK</sequence>